<gene>
    <name evidence="1" type="primary">rpsZ</name>
    <name evidence="1" type="synonym">rpsN</name>
    <name type="ordered locus">TPASS_0202</name>
</gene>
<sequence length="61" mass="6986">MATVAMINKAKATPKYATRRYNRCGVCGRPRGYMRRFQLCRLCFRKLASEGQIPGVTKSSW</sequence>
<evidence type="ECO:0000255" key="1">
    <source>
        <dbReference type="HAMAP-Rule" id="MF_01364"/>
    </source>
</evidence>
<evidence type="ECO:0000305" key="2"/>
<organism>
    <name type="scientific">Treponema pallidum subsp. pallidum (strain SS14)</name>
    <dbReference type="NCBI Taxonomy" id="455434"/>
    <lineage>
        <taxon>Bacteria</taxon>
        <taxon>Pseudomonadati</taxon>
        <taxon>Spirochaetota</taxon>
        <taxon>Spirochaetia</taxon>
        <taxon>Spirochaetales</taxon>
        <taxon>Treponemataceae</taxon>
        <taxon>Treponema</taxon>
    </lineage>
</organism>
<dbReference type="EMBL" id="CP000805">
    <property type="protein sequence ID" value="ACD70628.1"/>
    <property type="molecule type" value="Genomic_DNA"/>
</dbReference>
<dbReference type="RefSeq" id="WP_010881649.1">
    <property type="nucleotide sequence ID" value="NC_021508.1"/>
</dbReference>
<dbReference type="SMR" id="B2S2E9"/>
<dbReference type="KEGG" id="tpp:TPASS_0202"/>
<dbReference type="PATRIC" id="fig|455434.6.peg.205"/>
<dbReference type="Proteomes" id="UP000001202">
    <property type="component" value="Chromosome"/>
</dbReference>
<dbReference type="GO" id="GO:0005737">
    <property type="term" value="C:cytoplasm"/>
    <property type="evidence" value="ECO:0007669"/>
    <property type="project" value="UniProtKB-ARBA"/>
</dbReference>
<dbReference type="GO" id="GO:0015935">
    <property type="term" value="C:small ribosomal subunit"/>
    <property type="evidence" value="ECO:0007669"/>
    <property type="project" value="TreeGrafter"/>
</dbReference>
<dbReference type="GO" id="GO:0019843">
    <property type="term" value="F:rRNA binding"/>
    <property type="evidence" value="ECO:0007669"/>
    <property type="project" value="UniProtKB-UniRule"/>
</dbReference>
<dbReference type="GO" id="GO:0003735">
    <property type="term" value="F:structural constituent of ribosome"/>
    <property type="evidence" value="ECO:0007669"/>
    <property type="project" value="InterPro"/>
</dbReference>
<dbReference type="GO" id="GO:0008270">
    <property type="term" value="F:zinc ion binding"/>
    <property type="evidence" value="ECO:0007669"/>
    <property type="project" value="UniProtKB-UniRule"/>
</dbReference>
<dbReference type="GO" id="GO:0006412">
    <property type="term" value="P:translation"/>
    <property type="evidence" value="ECO:0007669"/>
    <property type="project" value="UniProtKB-UniRule"/>
</dbReference>
<dbReference type="FunFam" id="4.10.830.10:FF:000001">
    <property type="entry name" value="30S ribosomal protein S14 type Z"/>
    <property type="match status" value="1"/>
</dbReference>
<dbReference type="Gene3D" id="4.10.830.10">
    <property type="entry name" value="30s Ribosomal Protein S14, Chain N"/>
    <property type="match status" value="1"/>
</dbReference>
<dbReference type="HAMAP" id="MF_01364_B">
    <property type="entry name" value="Ribosomal_uS14_2_B"/>
    <property type="match status" value="1"/>
</dbReference>
<dbReference type="InterPro" id="IPR001209">
    <property type="entry name" value="Ribosomal_uS14"/>
</dbReference>
<dbReference type="InterPro" id="IPR023053">
    <property type="entry name" value="Ribosomal_uS14_bact"/>
</dbReference>
<dbReference type="InterPro" id="IPR018271">
    <property type="entry name" value="Ribosomal_uS14_CS"/>
</dbReference>
<dbReference type="InterPro" id="IPR043140">
    <property type="entry name" value="Ribosomal_uS14_sf"/>
</dbReference>
<dbReference type="NCBIfam" id="NF005974">
    <property type="entry name" value="PRK08061.1"/>
    <property type="match status" value="1"/>
</dbReference>
<dbReference type="PANTHER" id="PTHR19836">
    <property type="entry name" value="30S RIBOSOMAL PROTEIN S14"/>
    <property type="match status" value="1"/>
</dbReference>
<dbReference type="PANTHER" id="PTHR19836:SF19">
    <property type="entry name" value="SMALL RIBOSOMAL SUBUNIT PROTEIN US14M"/>
    <property type="match status" value="1"/>
</dbReference>
<dbReference type="Pfam" id="PF00253">
    <property type="entry name" value="Ribosomal_S14"/>
    <property type="match status" value="1"/>
</dbReference>
<dbReference type="SUPFAM" id="SSF57716">
    <property type="entry name" value="Glucocorticoid receptor-like (DNA-binding domain)"/>
    <property type="match status" value="1"/>
</dbReference>
<dbReference type="PROSITE" id="PS00527">
    <property type="entry name" value="RIBOSOMAL_S14"/>
    <property type="match status" value="1"/>
</dbReference>
<feature type="chain" id="PRO_1000143926" description="Small ribosomal subunit protein uS14">
    <location>
        <begin position="1"/>
        <end position="61"/>
    </location>
</feature>
<feature type="binding site" evidence="1">
    <location>
        <position position="24"/>
    </location>
    <ligand>
        <name>Zn(2+)</name>
        <dbReference type="ChEBI" id="CHEBI:29105"/>
    </ligand>
</feature>
<feature type="binding site" evidence="1">
    <location>
        <position position="27"/>
    </location>
    <ligand>
        <name>Zn(2+)</name>
        <dbReference type="ChEBI" id="CHEBI:29105"/>
    </ligand>
</feature>
<feature type="binding site" evidence="1">
    <location>
        <position position="40"/>
    </location>
    <ligand>
        <name>Zn(2+)</name>
        <dbReference type="ChEBI" id="CHEBI:29105"/>
    </ligand>
</feature>
<feature type="binding site" evidence="1">
    <location>
        <position position="43"/>
    </location>
    <ligand>
        <name>Zn(2+)</name>
        <dbReference type="ChEBI" id="CHEBI:29105"/>
    </ligand>
</feature>
<reference key="1">
    <citation type="journal article" date="2008" name="BMC Microbiol.">
        <title>Complete genome sequence of Treponema pallidum ssp. pallidum strain SS14 determined with oligonucleotide arrays.</title>
        <authorList>
            <person name="Matejkova P."/>
            <person name="Strouhal M."/>
            <person name="Smajs D."/>
            <person name="Norris S.J."/>
            <person name="Palzkill T."/>
            <person name="Petrosino J.F."/>
            <person name="Sodergren E."/>
            <person name="Norton J.E."/>
            <person name="Singh J."/>
            <person name="Richmond T.A."/>
            <person name="Molla M.N."/>
            <person name="Albert T.J."/>
            <person name="Weinstock G.M."/>
        </authorList>
    </citation>
    <scope>NUCLEOTIDE SEQUENCE [LARGE SCALE GENOMIC DNA]</scope>
    <source>
        <strain>SS14</strain>
    </source>
</reference>
<name>RS14Z_TREPS</name>
<keyword id="KW-0479">Metal-binding</keyword>
<keyword id="KW-0687">Ribonucleoprotein</keyword>
<keyword id="KW-0689">Ribosomal protein</keyword>
<keyword id="KW-0694">RNA-binding</keyword>
<keyword id="KW-0699">rRNA-binding</keyword>
<keyword id="KW-0862">Zinc</keyword>
<accession>B2S2E9</accession>
<protein>
    <recommendedName>
        <fullName evidence="1">Small ribosomal subunit protein uS14</fullName>
    </recommendedName>
    <alternativeName>
        <fullName evidence="2">30S ribosomal protein S14 type Z</fullName>
    </alternativeName>
</protein>
<comment type="function">
    <text evidence="1">Binds 16S rRNA, required for the assembly of 30S particles and may also be responsible for determining the conformation of the 16S rRNA at the A site.</text>
</comment>
<comment type="cofactor">
    <cofactor evidence="1">
        <name>Zn(2+)</name>
        <dbReference type="ChEBI" id="CHEBI:29105"/>
    </cofactor>
    <text evidence="1">Binds 1 zinc ion per subunit.</text>
</comment>
<comment type="subunit">
    <text evidence="1">Part of the 30S ribosomal subunit. Contacts proteins S3 and S10.</text>
</comment>
<comment type="similarity">
    <text evidence="1">Belongs to the universal ribosomal protein uS14 family. Zinc-binding uS14 subfamily.</text>
</comment>
<proteinExistence type="inferred from homology"/>